<name>PQQE_GRABC</name>
<accession>Q0BQS8</accession>
<protein>
    <recommendedName>
        <fullName evidence="1">PqqA peptide cyclase</fullName>
        <ecNumber evidence="1">1.21.98.4</ecNumber>
    </recommendedName>
    <alternativeName>
        <fullName evidence="1">Coenzyme PQQ synthesis protein E</fullName>
    </alternativeName>
    <alternativeName>
        <fullName evidence="1">Pyrroloquinoline quinone biosynthesis protein E</fullName>
    </alternativeName>
</protein>
<keyword id="KW-0004">4Fe-4S</keyword>
<keyword id="KW-0408">Iron</keyword>
<keyword id="KW-0411">Iron-sulfur</keyword>
<keyword id="KW-0479">Metal-binding</keyword>
<keyword id="KW-0560">Oxidoreductase</keyword>
<keyword id="KW-0884">PQQ biosynthesis</keyword>
<keyword id="KW-1185">Reference proteome</keyword>
<keyword id="KW-0949">S-adenosyl-L-methionine</keyword>
<proteinExistence type="inferred from homology"/>
<sequence>MSTIEPPMGLLAELTHRCPLQCPYCSNPLELERAGIELKTEEWLRIMDEAAELGVLQMHFSGGEPMVRKDLPELIARAVERQMYTNIITSGVLLDEAMMERLMKAGIDHIQLSFQDVDVENAERIGGLAGAQSKKLKAARLIKEAGLPLTLNYVIHRQNMENLPRMLEAAQAMGATRTEIANVQYYGWGLVNRDALLPSREQLEIATATVEEARERLKGVMVIDYVTPDYYAKRPKACMGGWARRFINISPSGKALPCHAAETLTGLEFPSVREWSLADIWSGAPAFQKYRGTDWMPEPCRSCDRREIDWGGCRCQAFALTGDMDITDPACALSPAHHVMEEAVSARGDVAPDYVYRRIGNAPVPNEVLSPVAE</sequence>
<evidence type="ECO:0000255" key="1">
    <source>
        <dbReference type="HAMAP-Rule" id="MF_00660"/>
    </source>
</evidence>
<evidence type="ECO:0000255" key="2">
    <source>
        <dbReference type="PROSITE-ProRule" id="PRU01266"/>
    </source>
</evidence>
<reference key="1">
    <citation type="journal article" date="2007" name="J. Bacteriol.">
        <title>Genome sequence analysis of the emerging human pathogenic acetic acid bacterium Granulibacter bethesdensis.</title>
        <authorList>
            <person name="Greenberg D.E."/>
            <person name="Porcella S.F."/>
            <person name="Zelazny A.M."/>
            <person name="Virtaneva K."/>
            <person name="Sturdevant D.E."/>
            <person name="Kupko J.J. III"/>
            <person name="Barbian K.D."/>
            <person name="Babar A."/>
            <person name="Dorward D.W."/>
            <person name="Holland S.M."/>
        </authorList>
    </citation>
    <scope>NUCLEOTIDE SEQUENCE [LARGE SCALE GENOMIC DNA]</scope>
    <source>
        <strain>ATCC BAA-1260 / CGDNIH1</strain>
    </source>
</reference>
<comment type="function">
    <text evidence="1">Catalyzes the cross-linking of a glutamate residue and a tyrosine residue in the PqqA protein as part of the biosynthesis of pyrroloquinoline quinone (PQQ).</text>
</comment>
<comment type="catalytic activity">
    <reaction evidence="1">
        <text>[PQQ precursor protein] + S-adenosyl-L-methionine = E-Y cross-linked-[PQQ precursor protein] + 5'-deoxyadenosine + L-methionine + H(+)</text>
        <dbReference type="Rhea" id="RHEA:56836"/>
        <dbReference type="Rhea" id="RHEA-COMP:14800"/>
        <dbReference type="Rhea" id="RHEA-COMP:14801"/>
        <dbReference type="ChEBI" id="CHEBI:15378"/>
        <dbReference type="ChEBI" id="CHEBI:17319"/>
        <dbReference type="ChEBI" id="CHEBI:57844"/>
        <dbReference type="ChEBI" id="CHEBI:59789"/>
        <dbReference type="ChEBI" id="CHEBI:141026"/>
        <dbReference type="ChEBI" id="CHEBI:141027"/>
        <dbReference type="EC" id="1.21.98.4"/>
    </reaction>
</comment>
<comment type="cofactor">
    <cofactor evidence="1">
        <name>[4Fe-4S] cluster</name>
        <dbReference type="ChEBI" id="CHEBI:49883"/>
    </cofactor>
    <text evidence="1">Binds 1 [4Fe-4S] cluster. The cluster is coordinated with 3 cysteines and an exchangeable S-adenosyl-L-methionine.</text>
</comment>
<comment type="pathway">
    <text evidence="1">Cofactor biosynthesis; pyrroloquinoline quinone biosynthesis.</text>
</comment>
<comment type="subunit">
    <text evidence="1">Interacts with PqqD. The interaction is necessary for activity of PqqE.</text>
</comment>
<comment type="similarity">
    <text evidence="1">Belongs to the radical SAM superfamily. PqqE family.</text>
</comment>
<dbReference type="EC" id="1.21.98.4" evidence="1"/>
<dbReference type="EMBL" id="CP000394">
    <property type="protein sequence ID" value="ABI62824.1"/>
    <property type="molecule type" value="Genomic_DNA"/>
</dbReference>
<dbReference type="RefSeq" id="WP_011632626.1">
    <property type="nucleotide sequence ID" value="NC_008343.2"/>
</dbReference>
<dbReference type="SMR" id="Q0BQS8"/>
<dbReference type="STRING" id="391165.GbCGDNIH1_1926"/>
<dbReference type="KEGG" id="gbe:GbCGDNIH1_1926"/>
<dbReference type="eggNOG" id="COG0535">
    <property type="taxonomic scope" value="Bacteria"/>
</dbReference>
<dbReference type="HOGENOM" id="CLU_009273_4_7_5"/>
<dbReference type="OrthoDB" id="9792276at2"/>
<dbReference type="UniPathway" id="UPA00539"/>
<dbReference type="Proteomes" id="UP000001963">
    <property type="component" value="Chromosome"/>
</dbReference>
<dbReference type="GO" id="GO:0051539">
    <property type="term" value="F:4 iron, 4 sulfur cluster binding"/>
    <property type="evidence" value="ECO:0007669"/>
    <property type="project" value="UniProtKB-KW"/>
</dbReference>
<dbReference type="GO" id="GO:0009975">
    <property type="term" value="F:cyclase activity"/>
    <property type="evidence" value="ECO:0007669"/>
    <property type="project" value="UniProtKB-UniRule"/>
</dbReference>
<dbReference type="GO" id="GO:0005506">
    <property type="term" value="F:iron ion binding"/>
    <property type="evidence" value="ECO:0007669"/>
    <property type="project" value="UniProtKB-UniRule"/>
</dbReference>
<dbReference type="GO" id="GO:0016491">
    <property type="term" value="F:oxidoreductase activity"/>
    <property type="evidence" value="ECO:0007669"/>
    <property type="project" value="UniProtKB-KW"/>
</dbReference>
<dbReference type="GO" id="GO:1904047">
    <property type="term" value="F:S-adenosyl-L-methionine binding"/>
    <property type="evidence" value="ECO:0007669"/>
    <property type="project" value="UniProtKB-UniRule"/>
</dbReference>
<dbReference type="GO" id="GO:0018189">
    <property type="term" value="P:pyrroloquinoline quinone biosynthetic process"/>
    <property type="evidence" value="ECO:0007669"/>
    <property type="project" value="UniProtKB-UniRule"/>
</dbReference>
<dbReference type="CDD" id="cd01335">
    <property type="entry name" value="Radical_SAM"/>
    <property type="match status" value="1"/>
</dbReference>
<dbReference type="CDD" id="cd21119">
    <property type="entry name" value="SPASM_PqqE"/>
    <property type="match status" value="1"/>
</dbReference>
<dbReference type="Gene3D" id="3.20.20.70">
    <property type="entry name" value="Aldolase class I"/>
    <property type="match status" value="1"/>
</dbReference>
<dbReference type="HAMAP" id="MF_00660">
    <property type="entry name" value="PqqE"/>
    <property type="match status" value="1"/>
</dbReference>
<dbReference type="InterPro" id="IPR023885">
    <property type="entry name" value="4Fe4S-binding_SPASM_dom"/>
</dbReference>
<dbReference type="InterPro" id="IPR013785">
    <property type="entry name" value="Aldolase_TIM"/>
</dbReference>
<dbReference type="InterPro" id="IPR006638">
    <property type="entry name" value="Elp3/MiaA/NifB-like_rSAM"/>
</dbReference>
<dbReference type="InterPro" id="IPR000385">
    <property type="entry name" value="MoaA_NifB_PqqE_Fe-S-bd_CS"/>
</dbReference>
<dbReference type="InterPro" id="IPR011843">
    <property type="entry name" value="PQQ_synth_PqqE_bac"/>
</dbReference>
<dbReference type="InterPro" id="IPR017200">
    <property type="entry name" value="PqqE-like"/>
</dbReference>
<dbReference type="InterPro" id="IPR050377">
    <property type="entry name" value="Radical_SAM_PqqE_MftC-like"/>
</dbReference>
<dbReference type="InterPro" id="IPR007197">
    <property type="entry name" value="rSAM"/>
</dbReference>
<dbReference type="NCBIfam" id="TIGR02109">
    <property type="entry name" value="PQQ_syn_pqqE"/>
    <property type="match status" value="1"/>
</dbReference>
<dbReference type="NCBIfam" id="TIGR04085">
    <property type="entry name" value="rSAM_more_4Fe4S"/>
    <property type="match status" value="1"/>
</dbReference>
<dbReference type="PANTHER" id="PTHR11228:SF7">
    <property type="entry name" value="PQQA PEPTIDE CYCLASE"/>
    <property type="match status" value="1"/>
</dbReference>
<dbReference type="PANTHER" id="PTHR11228">
    <property type="entry name" value="RADICAL SAM DOMAIN PROTEIN"/>
    <property type="match status" value="1"/>
</dbReference>
<dbReference type="Pfam" id="PF13353">
    <property type="entry name" value="Fer4_12"/>
    <property type="match status" value="1"/>
</dbReference>
<dbReference type="Pfam" id="PF04055">
    <property type="entry name" value="Radical_SAM"/>
    <property type="match status" value="1"/>
</dbReference>
<dbReference type="Pfam" id="PF13186">
    <property type="entry name" value="SPASM"/>
    <property type="match status" value="1"/>
</dbReference>
<dbReference type="PIRSF" id="PIRSF037420">
    <property type="entry name" value="PQQ_syn_pqqE"/>
    <property type="match status" value="1"/>
</dbReference>
<dbReference type="SFLD" id="SFLDF00280">
    <property type="entry name" value="coenzyme_PQQ_synthesis_protein"/>
    <property type="match status" value="1"/>
</dbReference>
<dbReference type="SFLD" id="SFLDG01386">
    <property type="entry name" value="main_SPASM_domain-containing"/>
    <property type="match status" value="1"/>
</dbReference>
<dbReference type="SMART" id="SM00729">
    <property type="entry name" value="Elp3"/>
    <property type="match status" value="1"/>
</dbReference>
<dbReference type="SUPFAM" id="SSF102114">
    <property type="entry name" value="Radical SAM enzymes"/>
    <property type="match status" value="1"/>
</dbReference>
<dbReference type="PROSITE" id="PS01305">
    <property type="entry name" value="MOAA_NIFB_PQQE"/>
    <property type="match status" value="1"/>
</dbReference>
<dbReference type="PROSITE" id="PS51918">
    <property type="entry name" value="RADICAL_SAM"/>
    <property type="match status" value="1"/>
</dbReference>
<organism>
    <name type="scientific">Granulibacter bethesdensis (strain ATCC BAA-1260 / CGDNIH1)</name>
    <dbReference type="NCBI Taxonomy" id="391165"/>
    <lineage>
        <taxon>Bacteria</taxon>
        <taxon>Pseudomonadati</taxon>
        <taxon>Pseudomonadota</taxon>
        <taxon>Alphaproteobacteria</taxon>
        <taxon>Acetobacterales</taxon>
        <taxon>Acetobacteraceae</taxon>
        <taxon>Granulibacter</taxon>
    </lineage>
</organism>
<feature type="chain" id="PRO_1000082832" description="PqqA peptide cyclase">
    <location>
        <begin position="1"/>
        <end position="374"/>
    </location>
</feature>
<feature type="domain" description="Radical SAM core" evidence="2">
    <location>
        <begin position="4"/>
        <end position="224"/>
    </location>
</feature>
<feature type="binding site" evidence="1">
    <location>
        <position position="18"/>
    </location>
    <ligand>
        <name>[4Fe-4S] cluster</name>
        <dbReference type="ChEBI" id="CHEBI:49883"/>
        <note>4Fe-4S-S-AdoMet</note>
    </ligand>
</feature>
<feature type="binding site" evidence="1">
    <location>
        <position position="22"/>
    </location>
    <ligand>
        <name>[4Fe-4S] cluster</name>
        <dbReference type="ChEBI" id="CHEBI:49883"/>
        <note>4Fe-4S-S-AdoMet</note>
    </ligand>
</feature>
<feature type="binding site" evidence="1">
    <location>
        <position position="25"/>
    </location>
    <ligand>
        <name>[4Fe-4S] cluster</name>
        <dbReference type="ChEBI" id="CHEBI:49883"/>
        <note>4Fe-4S-S-AdoMet</note>
    </ligand>
</feature>
<gene>
    <name evidence="1" type="primary">pqqE</name>
    <name type="ordered locus">GbCGDNIH1_1926</name>
</gene>